<reference key="1">
    <citation type="journal article" date="2002" name="Proc. Natl. Acad. Sci. U.S.A.">
        <title>Extensive mosaic structure revealed by the complete genome sequence of uropathogenic Escherichia coli.</title>
        <authorList>
            <person name="Welch R.A."/>
            <person name="Burland V."/>
            <person name="Plunkett G. III"/>
            <person name="Redford P."/>
            <person name="Roesch P."/>
            <person name="Rasko D."/>
            <person name="Buckles E.L."/>
            <person name="Liou S.-R."/>
            <person name="Boutin A."/>
            <person name="Hackett J."/>
            <person name="Stroud D."/>
            <person name="Mayhew G.F."/>
            <person name="Rose D.J."/>
            <person name="Zhou S."/>
            <person name="Schwartz D.C."/>
            <person name="Perna N.T."/>
            <person name="Mobley H.L.T."/>
            <person name="Donnenberg M.S."/>
            <person name="Blattner F.R."/>
        </authorList>
    </citation>
    <scope>NUCLEOTIDE SEQUENCE [LARGE SCALE GENOMIC DNA]</scope>
    <source>
        <strain>CFT073 / ATCC 700928 / UPEC</strain>
    </source>
</reference>
<feature type="chain" id="PRO_0000155650" description="Probable manganese efflux pump MntP">
    <location>
        <begin position="1"/>
        <end position="188"/>
    </location>
</feature>
<feature type="transmembrane region" description="Helical" evidence="1">
    <location>
        <begin position="3"/>
        <end position="23"/>
    </location>
</feature>
<feature type="transmembrane region" description="Helical" evidence="1">
    <location>
        <begin position="66"/>
        <end position="86"/>
    </location>
</feature>
<feature type="transmembrane region" description="Helical" evidence="1">
    <location>
        <begin position="106"/>
        <end position="128"/>
    </location>
</feature>
<feature type="transmembrane region" description="Helical" evidence="1">
    <location>
        <begin position="143"/>
        <end position="163"/>
    </location>
</feature>
<feature type="transmembrane region" description="Helical" evidence="1">
    <location>
        <begin position="168"/>
        <end position="188"/>
    </location>
</feature>
<comment type="function">
    <text evidence="1">Probably functions as a manganese efflux pump.</text>
</comment>
<comment type="subcellular location">
    <subcellularLocation>
        <location evidence="1">Cell inner membrane</location>
        <topology evidence="1">Multi-pass membrane protein</topology>
    </subcellularLocation>
</comment>
<comment type="similarity">
    <text evidence="1">Belongs to the MntP (TC 9.B.29) family.</text>
</comment>
<comment type="sequence caution" evidence="2">
    <conflict type="erroneous initiation">
        <sequence resource="EMBL-CDS" id="AAN80687"/>
    </conflict>
</comment>
<accession>Q8FGU0</accession>
<gene>
    <name evidence="1" type="primary">mntP</name>
    <name type="synonym">yebN</name>
    <name type="ordered locus">c2228</name>
</gene>
<proteinExistence type="inferred from homology"/>
<sequence>MNITATVLLAFGMSMDAFAASIGKGATLHKPKFSEALRTGLIFGAVETLTPLIGWGMGMLASRFVLEWNHWIAFVLLIFLGGRMIIEGFRGADDEDEEPRRRHGFWLLVTTAIATSLDAMAVGVGLAFLQVNIIATALAIGCATLIMSTLGMMVGRFIGSIIGKKAEILGGLVLIGIGVQILWTHFHG</sequence>
<organism>
    <name type="scientific">Escherichia coli O6:H1 (strain CFT073 / ATCC 700928 / UPEC)</name>
    <dbReference type="NCBI Taxonomy" id="199310"/>
    <lineage>
        <taxon>Bacteria</taxon>
        <taxon>Pseudomonadati</taxon>
        <taxon>Pseudomonadota</taxon>
        <taxon>Gammaproteobacteria</taxon>
        <taxon>Enterobacterales</taxon>
        <taxon>Enterobacteriaceae</taxon>
        <taxon>Escherichia</taxon>
    </lineage>
</organism>
<dbReference type="EMBL" id="AE014075">
    <property type="protein sequence ID" value="AAN80687.1"/>
    <property type="status" value="ALT_INIT"/>
    <property type="molecule type" value="Genomic_DNA"/>
</dbReference>
<dbReference type="RefSeq" id="WP_001296134.1">
    <property type="nucleotide sequence ID" value="NZ_CP051263.1"/>
</dbReference>
<dbReference type="STRING" id="199310.c2228"/>
<dbReference type="GeneID" id="93776070"/>
<dbReference type="KEGG" id="ecc:c2228"/>
<dbReference type="eggNOG" id="COG1971">
    <property type="taxonomic scope" value="Bacteria"/>
</dbReference>
<dbReference type="HOGENOM" id="CLU_096410_0_0_6"/>
<dbReference type="Proteomes" id="UP000001410">
    <property type="component" value="Chromosome"/>
</dbReference>
<dbReference type="GO" id="GO:0005886">
    <property type="term" value="C:plasma membrane"/>
    <property type="evidence" value="ECO:0007669"/>
    <property type="project" value="UniProtKB-SubCell"/>
</dbReference>
<dbReference type="GO" id="GO:0005384">
    <property type="term" value="F:manganese ion transmembrane transporter activity"/>
    <property type="evidence" value="ECO:0007669"/>
    <property type="project" value="UniProtKB-UniRule"/>
</dbReference>
<dbReference type="HAMAP" id="MF_01521">
    <property type="entry name" value="MntP_pump"/>
    <property type="match status" value="1"/>
</dbReference>
<dbReference type="InterPro" id="IPR003810">
    <property type="entry name" value="Mntp/YtaF"/>
</dbReference>
<dbReference type="InterPro" id="IPR022929">
    <property type="entry name" value="Put_MntP"/>
</dbReference>
<dbReference type="NCBIfam" id="NF008546">
    <property type="entry name" value="PRK11469.1"/>
    <property type="match status" value="1"/>
</dbReference>
<dbReference type="PANTHER" id="PTHR35529">
    <property type="entry name" value="MANGANESE EFFLUX PUMP MNTP-RELATED"/>
    <property type="match status" value="1"/>
</dbReference>
<dbReference type="PANTHER" id="PTHR35529:SF1">
    <property type="entry name" value="MANGANESE EFFLUX PUMP MNTP-RELATED"/>
    <property type="match status" value="1"/>
</dbReference>
<dbReference type="Pfam" id="PF02659">
    <property type="entry name" value="Mntp"/>
    <property type="match status" value="1"/>
</dbReference>
<protein>
    <recommendedName>
        <fullName evidence="1">Probable manganese efflux pump MntP</fullName>
    </recommendedName>
</protein>
<keyword id="KW-0997">Cell inner membrane</keyword>
<keyword id="KW-1003">Cell membrane</keyword>
<keyword id="KW-0406">Ion transport</keyword>
<keyword id="KW-0464">Manganese</keyword>
<keyword id="KW-0472">Membrane</keyword>
<keyword id="KW-1185">Reference proteome</keyword>
<keyword id="KW-0812">Transmembrane</keyword>
<keyword id="KW-1133">Transmembrane helix</keyword>
<keyword id="KW-0813">Transport</keyword>
<evidence type="ECO:0000255" key="1">
    <source>
        <dbReference type="HAMAP-Rule" id="MF_01521"/>
    </source>
</evidence>
<evidence type="ECO:0000305" key="2"/>
<name>MNTP_ECOL6</name>